<evidence type="ECO:0000255" key="1">
    <source>
        <dbReference type="HAMAP-Rule" id="MF_01605"/>
    </source>
</evidence>
<keyword id="KW-0119">Carbohydrate metabolism</keyword>
<keyword id="KW-0313">Glucose metabolism</keyword>
<keyword id="KW-0378">Hydrolase</keyword>
<sequence length="334" mass="36445">MKQAVYVASPDSQQIHVWQLDSAGELTLLQTVDVPGQVQPMAISPNQRHLYVGVRPDFGIVSYHIADDGTLTAAGMAPLPGSPTHIDTDRQGRFLFSASYSFNCVSISPIDTHGVVQAPIQQLDDLPAPHSANIDPTNQILLVPCLKEDKVRLFDLSAEGQLTPHAQADITVAAGAGPRHMAFHPNHQVAYCVNELNSSVDVYQISNNGQEYHLVQSLDAMPADFTGTRWAADIHITPNGRYLYISDRTANLLGIFTVSKDGRVISLVGHHLTEAQPRGFNIDHSGNFLIASGQKSDHIEVYRIDQNTGELTTLKRYPVGKGPMWVSIRGAQNS</sequence>
<name>6PGL_YERPY</name>
<dbReference type="EC" id="3.1.1.31" evidence="1"/>
<dbReference type="EMBL" id="CP000950">
    <property type="protein sequence ID" value="ACA69207.1"/>
    <property type="molecule type" value="Genomic_DNA"/>
</dbReference>
<dbReference type="RefSeq" id="WP_011191955.1">
    <property type="nucleotide sequence ID" value="NZ_CP009792.1"/>
</dbReference>
<dbReference type="SMR" id="B1JSS6"/>
<dbReference type="GeneID" id="49786747"/>
<dbReference type="KEGG" id="ypy:YPK_2933"/>
<dbReference type="PATRIC" id="fig|502800.11.peg.3654"/>
<dbReference type="UniPathway" id="UPA00115">
    <property type="reaction ID" value="UER00409"/>
</dbReference>
<dbReference type="GO" id="GO:0005829">
    <property type="term" value="C:cytosol"/>
    <property type="evidence" value="ECO:0007669"/>
    <property type="project" value="TreeGrafter"/>
</dbReference>
<dbReference type="GO" id="GO:0017057">
    <property type="term" value="F:6-phosphogluconolactonase activity"/>
    <property type="evidence" value="ECO:0007669"/>
    <property type="project" value="UniProtKB-UniRule"/>
</dbReference>
<dbReference type="GO" id="GO:0006006">
    <property type="term" value="P:glucose metabolic process"/>
    <property type="evidence" value="ECO:0007669"/>
    <property type="project" value="UniProtKB-KW"/>
</dbReference>
<dbReference type="GO" id="GO:0009051">
    <property type="term" value="P:pentose-phosphate shunt, oxidative branch"/>
    <property type="evidence" value="ECO:0007669"/>
    <property type="project" value="UniProtKB-UniRule"/>
</dbReference>
<dbReference type="FunFam" id="2.130.10.10:FF:000051">
    <property type="entry name" value="6-phosphogluconolactonase"/>
    <property type="match status" value="1"/>
</dbReference>
<dbReference type="Gene3D" id="2.130.10.10">
    <property type="entry name" value="YVTN repeat-like/Quinoprotein amine dehydrogenase"/>
    <property type="match status" value="1"/>
</dbReference>
<dbReference type="HAMAP" id="MF_01605">
    <property type="entry name" value="6P_gluconolactonase"/>
    <property type="match status" value="1"/>
</dbReference>
<dbReference type="InterPro" id="IPR022528">
    <property type="entry name" value="6-phosphogluconolactonase_YbhE"/>
</dbReference>
<dbReference type="InterPro" id="IPR050282">
    <property type="entry name" value="Cycloisomerase_2"/>
</dbReference>
<dbReference type="InterPro" id="IPR019405">
    <property type="entry name" value="Lactonase_7-beta_prop"/>
</dbReference>
<dbReference type="InterPro" id="IPR011045">
    <property type="entry name" value="N2O_reductase_N"/>
</dbReference>
<dbReference type="InterPro" id="IPR015943">
    <property type="entry name" value="WD40/YVTN_repeat-like_dom_sf"/>
</dbReference>
<dbReference type="NCBIfam" id="NF008258">
    <property type="entry name" value="PRK11028.1"/>
    <property type="match status" value="1"/>
</dbReference>
<dbReference type="PANTHER" id="PTHR30344:SF1">
    <property type="entry name" value="6-PHOSPHOGLUCONOLACTONASE"/>
    <property type="match status" value="1"/>
</dbReference>
<dbReference type="PANTHER" id="PTHR30344">
    <property type="entry name" value="6-PHOSPHOGLUCONOLACTONASE-RELATED"/>
    <property type="match status" value="1"/>
</dbReference>
<dbReference type="Pfam" id="PF10282">
    <property type="entry name" value="Lactonase"/>
    <property type="match status" value="1"/>
</dbReference>
<dbReference type="SUPFAM" id="SSF50974">
    <property type="entry name" value="Nitrous oxide reductase, N-terminal domain"/>
    <property type="match status" value="1"/>
</dbReference>
<organism>
    <name type="scientific">Yersinia pseudotuberculosis serotype O:3 (strain YPIII)</name>
    <dbReference type="NCBI Taxonomy" id="502800"/>
    <lineage>
        <taxon>Bacteria</taxon>
        <taxon>Pseudomonadati</taxon>
        <taxon>Pseudomonadota</taxon>
        <taxon>Gammaproteobacteria</taxon>
        <taxon>Enterobacterales</taxon>
        <taxon>Yersiniaceae</taxon>
        <taxon>Yersinia</taxon>
    </lineage>
</organism>
<protein>
    <recommendedName>
        <fullName evidence="1">6-phosphogluconolactonase</fullName>
        <shortName evidence="1">6-P-gluconolactonase</shortName>
        <ecNumber evidence="1">3.1.1.31</ecNumber>
    </recommendedName>
</protein>
<accession>B1JSS6</accession>
<comment type="function">
    <text evidence="1">Catalyzes the hydrolysis of 6-phosphogluconolactone to 6-phosphogluconate.</text>
</comment>
<comment type="catalytic activity">
    <reaction evidence="1">
        <text>6-phospho-D-glucono-1,5-lactone + H2O = 6-phospho-D-gluconate + H(+)</text>
        <dbReference type="Rhea" id="RHEA:12556"/>
        <dbReference type="ChEBI" id="CHEBI:15377"/>
        <dbReference type="ChEBI" id="CHEBI:15378"/>
        <dbReference type="ChEBI" id="CHEBI:57955"/>
        <dbReference type="ChEBI" id="CHEBI:58759"/>
        <dbReference type="EC" id="3.1.1.31"/>
    </reaction>
</comment>
<comment type="pathway">
    <text evidence="1">Carbohydrate degradation; pentose phosphate pathway; D-ribulose 5-phosphate from D-glucose 6-phosphate (oxidative stage): step 2/3.</text>
</comment>
<comment type="similarity">
    <text evidence="1">Belongs to the cycloisomerase 2 family.</text>
</comment>
<feature type="chain" id="PRO_1000148171" description="6-phosphogluconolactonase">
    <location>
        <begin position="1"/>
        <end position="334"/>
    </location>
</feature>
<proteinExistence type="inferred from homology"/>
<reference key="1">
    <citation type="submission" date="2008-02" db="EMBL/GenBank/DDBJ databases">
        <title>Complete sequence of Yersinia pseudotuberculosis YPIII.</title>
        <authorList>
            <consortium name="US DOE Joint Genome Institute"/>
            <person name="Copeland A."/>
            <person name="Lucas S."/>
            <person name="Lapidus A."/>
            <person name="Glavina del Rio T."/>
            <person name="Dalin E."/>
            <person name="Tice H."/>
            <person name="Bruce D."/>
            <person name="Goodwin L."/>
            <person name="Pitluck S."/>
            <person name="Munk A.C."/>
            <person name="Brettin T."/>
            <person name="Detter J.C."/>
            <person name="Han C."/>
            <person name="Tapia R."/>
            <person name="Schmutz J."/>
            <person name="Larimer F."/>
            <person name="Land M."/>
            <person name="Hauser L."/>
            <person name="Challacombe J.F."/>
            <person name="Green L."/>
            <person name="Lindler L.E."/>
            <person name="Nikolich M.P."/>
            <person name="Richardson P."/>
        </authorList>
    </citation>
    <scope>NUCLEOTIDE SEQUENCE [LARGE SCALE GENOMIC DNA]</scope>
    <source>
        <strain>YPIII</strain>
    </source>
</reference>
<gene>
    <name evidence="1" type="primary">pgl</name>
    <name type="ordered locus">YPK_2933</name>
</gene>